<sequence length="625" mass="69929">MQVPSPSAREAASMYGTAVAVFLVLLVAVLQGLAPPESPLPYRIPLDPKGDLELSWDVSYTQKTIYFQLLVQELKAGVLFGMSDRGELENADLVVLWTDGDNAYFGDAWSDQRGQIHLDSQQDYQLLRAQRTPKGLCLLFKRPFGTCDPKDYFIEDGTVHLVYGVLEEPFGSLEAINTSGLQKGLQRVQLLKPKISIPALPEDRRTMDIQAHNVLIPSKTTYWCHLTKLPQDFPRHHIVMYEPIITKGNEALVHHIEIFQCTNQFQNITSFSGSCDSKEKPQELKVCRHVLAAWALGARAFYYPEEAGLAFGGSNSSRFLLLEIHYHNPTNIRGRYDNSGIRLHYTAKLRHFNAGIMELGLVYTPVMAIPPKESAFVLTGYCTAKCTQAALPPLGIRIFASQLHTHLTGTKVVTMLVRDGQEIEIVNRDDHYSPNFQEIRMLKKTVYVYPGDVLITSCTYNTEDKNEATVGGLGTQEEMCVNYIHYYPQTQLELCKSHIDPCFLQKYFHLVNRSNLGEYCTCPQASGTTCPQASGTTCPRASVPEQFASVPWNSFSRVVLKALYDFIPVTVHCNKSSAVRFPGKWDLQPLPEIISKLKEPTPRCPTSRDQSSSSLTVVNIGGGKV</sequence>
<keyword id="KW-0127">Catecholamine biosynthesis</keyword>
<keyword id="KW-0186">Copper</keyword>
<keyword id="KW-0968">Cytoplasmic vesicle</keyword>
<keyword id="KW-1015">Disulfide bond</keyword>
<keyword id="KW-0325">Glycoprotein</keyword>
<keyword id="KW-0472">Membrane</keyword>
<keyword id="KW-0479">Metal-binding</keyword>
<keyword id="KW-0503">Monooxygenase</keyword>
<keyword id="KW-0560">Oxidoreductase</keyword>
<keyword id="KW-1185">Reference proteome</keyword>
<keyword id="KW-0964">Secreted</keyword>
<keyword id="KW-0735">Signal-anchor</keyword>
<keyword id="KW-0812">Transmembrane</keyword>
<keyword id="KW-1133">Transmembrane helix</keyword>
<keyword id="KW-0847">Vitamin C</keyword>
<comment type="function">
    <text evidence="1">Catalyzes the hydroxylation of dopamine to noradrenaline (also known as norepinephrine), and is thus vital for regulation of these neurotransmitters.</text>
</comment>
<comment type="catalytic activity">
    <reaction evidence="1">
        <text>dopamine + 2 L-ascorbate + O2 = (R)-noradrenaline + 2 monodehydro-L-ascorbate radical + H2O</text>
        <dbReference type="Rhea" id="RHEA:19117"/>
        <dbReference type="ChEBI" id="CHEBI:15377"/>
        <dbReference type="ChEBI" id="CHEBI:15379"/>
        <dbReference type="ChEBI" id="CHEBI:38290"/>
        <dbReference type="ChEBI" id="CHEBI:59513"/>
        <dbReference type="ChEBI" id="CHEBI:59905"/>
        <dbReference type="ChEBI" id="CHEBI:72587"/>
        <dbReference type="EC" id="1.14.17.1"/>
    </reaction>
    <physiologicalReaction direction="left-to-right" evidence="1">
        <dbReference type="Rhea" id="RHEA:19118"/>
    </physiologicalReaction>
</comment>
<comment type="cofactor">
    <cofactor evidence="1">
        <name>Cu(2+)</name>
        <dbReference type="ChEBI" id="CHEBI:29036"/>
    </cofactor>
    <text evidence="1">Binds 2 copper ions per subunit.</text>
</comment>
<comment type="pathway">
    <text evidence="1">Catecholamine biosynthesis; (R)-noradrenaline biosynthesis; (R)-noradrenaline from dopamine: step 1/1.</text>
</comment>
<comment type="subunit">
    <text evidence="1">Homotetramer; composed of two disulfide-linked dimers.</text>
</comment>
<comment type="subcellular location">
    <molecule>Soluble dopamine beta-hydroxylase</molecule>
    <subcellularLocation>
        <location evidence="1">Cytoplasmic vesicle</location>
        <location evidence="1">Secretory vesicle lumen</location>
    </subcellularLocation>
    <subcellularLocation>
        <location evidence="1">Cytoplasmic vesicle</location>
        <location evidence="1">Secretory vesicle</location>
        <location evidence="1">Chromaffin granule lumen</location>
    </subcellularLocation>
    <subcellularLocation>
        <location evidence="1">Secreted</location>
    </subcellularLocation>
</comment>
<comment type="subcellular location">
    <subcellularLocation>
        <location evidence="1">Cytoplasmic vesicle</location>
        <location evidence="1">Secretory vesicle membrane</location>
        <topology evidence="1">Single-pass type II membrane protein</topology>
    </subcellularLocation>
    <subcellularLocation>
        <location evidence="1">Cytoplasmic vesicle</location>
        <location evidence="1">Secretory vesicle</location>
        <location evidence="1">Chromaffin granule membrane</location>
        <topology evidence="1">Single-pass type II membrane protein</topology>
    </subcellularLocation>
</comment>
<comment type="PTM">
    <text evidence="2">Proteolytic cleavage after the membrane-anchor leads to the release of the soluble form.</text>
</comment>
<comment type="PTM">
    <text evidence="1">N-glycosylated.</text>
</comment>
<comment type="similarity">
    <text evidence="6">Belongs to the copper type II ascorbate-dependent monooxygenase family.</text>
</comment>
<feature type="chain" id="PRO_0000305212" description="Dopamine beta-hydroxylase">
    <location>
        <begin position="1"/>
        <end position="625"/>
    </location>
</feature>
<feature type="chain" id="PRO_0000308207" description="Soluble dopamine beta-hydroxylase" evidence="3">
    <location>
        <begin position="33"/>
        <end position="625"/>
    </location>
</feature>
<feature type="topological domain" description="Cytoplasmic" evidence="3">
    <location>
        <begin position="1"/>
        <end position="9"/>
    </location>
</feature>
<feature type="transmembrane region" description="Helical; Signal-anchor for type II membrane protein" evidence="3">
    <location>
        <begin position="10"/>
        <end position="30"/>
    </location>
</feature>
<feature type="topological domain" description="Intragranular" evidence="3">
    <location>
        <begin position="31"/>
        <end position="625"/>
    </location>
</feature>
<feature type="domain" description="DOMON" evidence="4">
    <location>
        <begin position="50"/>
        <end position="166"/>
    </location>
</feature>
<feature type="active site" evidence="3">
    <location>
        <position position="222"/>
    </location>
</feature>
<feature type="active site" evidence="3">
    <location>
        <position position="404"/>
    </location>
</feature>
<feature type="binding site" evidence="1">
    <location>
        <position position="254"/>
    </location>
    <ligand>
        <name>Cu(2+)</name>
        <dbReference type="ChEBI" id="CHEBI:29036"/>
        <label>A</label>
    </ligand>
</feature>
<feature type="binding site" evidence="1">
    <location>
        <position position="255"/>
    </location>
    <ligand>
        <name>Cu(2+)</name>
        <dbReference type="ChEBI" id="CHEBI:29036"/>
        <label>A</label>
    </ligand>
</feature>
<feature type="binding site" evidence="1">
    <location>
        <position position="325"/>
    </location>
    <ligand>
        <name>Cu(2+)</name>
        <dbReference type="ChEBI" id="CHEBI:29036"/>
        <label>A</label>
    </ligand>
</feature>
<feature type="binding site" evidence="1">
    <location>
        <position position="404"/>
    </location>
    <ligand>
        <name>Cu(2+)</name>
        <dbReference type="ChEBI" id="CHEBI:29036"/>
        <label>B</label>
    </ligand>
</feature>
<feature type="binding site" evidence="1">
    <location>
        <position position="406"/>
    </location>
    <ligand>
        <name>Cu(2+)</name>
        <dbReference type="ChEBI" id="CHEBI:29036"/>
        <label>B</label>
    </ligand>
</feature>
<feature type="binding site" evidence="1">
    <location>
        <position position="479"/>
    </location>
    <ligand>
        <name>Cu(2+)</name>
        <dbReference type="ChEBI" id="CHEBI:29036"/>
        <label>B</label>
    </ligand>
</feature>
<feature type="site" description="Cleavage" evidence="2">
    <location>
        <begin position="32"/>
        <end position="33"/>
    </location>
</feature>
<feature type="glycosylation site" description="N-linked (GlcNAc...) asparagine" evidence="3">
    <location>
        <position position="177"/>
    </location>
</feature>
<feature type="glycosylation site" description="N-linked (GlcNAc...) asparagine" evidence="3">
    <location>
        <position position="315"/>
    </location>
</feature>
<feature type="glycosylation site" description="N-linked (GlcNAc...) asparagine" evidence="3">
    <location>
        <position position="574"/>
    </location>
</feature>
<feature type="disulfide bond" evidence="1">
    <location>
        <begin position="147"/>
        <end position="604"/>
    </location>
</feature>
<feature type="disulfide bond" evidence="1">
    <location>
        <begin position="224"/>
        <end position="275"/>
    </location>
</feature>
<feature type="disulfide bond" evidence="1">
    <location>
        <begin position="261"/>
        <end position="287"/>
    </location>
</feature>
<feature type="disulfide bond" evidence="1">
    <location>
        <begin position="382"/>
        <end position="495"/>
    </location>
</feature>
<feature type="disulfide bond" evidence="1">
    <location>
        <begin position="386"/>
        <end position="573"/>
    </location>
</feature>
<feature type="disulfide bond" evidence="1">
    <location>
        <begin position="458"/>
        <end position="480"/>
    </location>
</feature>
<feature type="disulfide bond" description="Interchain" evidence="1">
    <location>
        <position position="520"/>
    </location>
</feature>
<feature type="disulfide bond" description="Interchain" evidence="1">
    <location>
        <position position="522"/>
    </location>
</feature>
<feature type="sequence variant" description="Frequent in Golden retrievers and Labrador retrievers." evidence="5">
    <original>N</original>
    <variation>K</variation>
    <location>
        <position position="263"/>
    </location>
</feature>
<feature type="sequence variant" description="In strain: Shiba." evidence="5">
    <original>S</original>
    <variation>G</variation>
    <location>
        <position position="607"/>
    </location>
</feature>
<protein>
    <recommendedName>
        <fullName>Dopamine beta-hydroxylase</fullName>
        <ecNumber evidence="1">1.14.17.1</ecNumber>
    </recommendedName>
    <component>
        <recommendedName>
            <fullName>Soluble dopamine beta-hydroxylase</fullName>
        </recommendedName>
    </component>
</protein>
<dbReference type="EC" id="1.14.17.1" evidence="1"/>
<dbReference type="EMBL" id="AB097057">
    <property type="protein sequence ID" value="BAD42327.1"/>
    <property type="molecule type" value="mRNA"/>
</dbReference>
<dbReference type="RefSeq" id="NP_001005263.1">
    <property type="nucleotide sequence ID" value="NM_001005263.1"/>
</dbReference>
<dbReference type="SMR" id="Q68CI2"/>
<dbReference type="FunCoup" id="Q68CI2">
    <property type="interactions" value="20"/>
</dbReference>
<dbReference type="STRING" id="9615.ENSCAFP00000029281"/>
<dbReference type="GlyCosmos" id="Q68CI2">
    <property type="glycosylation" value="3 sites, No reported glycans"/>
</dbReference>
<dbReference type="PaxDb" id="9612-ENSCAFP00000029281"/>
<dbReference type="Ensembl" id="ENSCAFT00000031457.3">
    <property type="protein sequence ID" value="ENSCAFP00000029281.2"/>
    <property type="gene ID" value="ENSCAFG00000019783.4"/>
</dbReference>
<dbReference type="GeneID" id="448806"/>
<dbReference type="KEGG" id="cfa:448806"/>
<dbReference type="CTD" id="1621"/>
<dbReference type="VGNC" id="VGNC:39781">
    <property type="gene designation" value="DBH"/>
</dbReference>
<dbReference type="eggNOG" id="KOG3568">
    <property type="taxonomic scope" value="Eukaryota"/>
</dbReference>
<dbReference type="HOGENOM" id="CLU_017939_3_0_1"/>
<dbReference type="InParanoid" id="Q68CI2"/>
<dbReference type="OMA" id="FPHFSGP"/>
<dbReference type="OrthoDB" id="129121at2759"/>
<dbReference type="TreeFam" id="TF320698"/>
<dbReference type="BRENDA" id="1.14.16.2">
    <property type="organism ID" value="1153"/>
</dbReference>
<dbReference type="UniPathway" id="UPA00748">
    <property type="reaction ID" value="UER00735"/>
</dbReference>
<dbReference type="Proteomes" id="UP000002254">
    <property type="component" value="Chromosome 9"/>
</dbReference>
<dbReference type="Proteomes" id="UP000694429">
    <property type="component" value="Unplaced"/>
</dbReference>
<dbReference type="Proteomes" id="UP000694542">
    <property type="component" value="Unplaced"/>
</dbReference>
<dbReference type="Proteomes" id="UP000805418">
    <property type="component" value="Unplaced"/>
</dbReference>
<dbReference type="Bgee" id="ENSCAFG00000019783">
    <property type="expression patterns" value="Expressed in adrenal cortex and 16 other cell types or tissues"/>
</dbReference>
<dbReference type="GO" id="GO:0034466">
    <property type="term" value="C:chromaffin granule lumen"/>
    <property type="evidence" value="ECO:0007669"/>
    <property type="project" value="UniProtKB-SubCell"/>
</dbReference>
<dbReference type="GO" id="GO:0042584">
    <property type="term" value="C:chromaffin granule membrane"/>
    <property type="evidence" value="ECO:0007669"/>
    <property type="project" value="UniProtKB-SubCell"/>
</dbReference>
<dbReference type="GO" id="GO:0005615">
    <property type="term" value="C:extracellular space"/>
    <property type="evidence" value="ECO:0000250"/>
    <property type="project" value="UniProtKB"/>
</dbReference>
<dbReference type="GO" id="GO:0034774">
    <property type="term" value="C:secretory granule lumen"/>
    <property type="evidence" value="ECO:0000250"/>
    <property type="project" value="UniProtKB"/>
</dbReference>
<dbReference type="GO" id="GO:0030667">
    <property type="term" value="C:secretory granule membrane"/>
    <property type="evidence" value="ECO:0000250"/>
    <property type="project" value="UniProtKB"/>
</dbReference>
<dbReference type="GO" id="GO:0030658">
    <property type="term" value="C:transport vesicle membrane"/>
    <property type="evidence" value="ECO:0007669"/>
    <property type="project" value="UniProtKB-SubCell"/>
</dbReference>
<dbReference type="GO" id="GO:0005507">
    <property type="term" value="F:copper ion binding"/>
    <property type="evidence" value="ECO:0000250"/>
    <property type="project" value="UniProtKB"/>
</dbReference>
<dbReference type="GO" id="GO:0004500">
    <property type="term" value="F:dopamine beta-monooxygenase activity"/>
    <property type="evidence" value="ECO:0000250"/>
    <property type="project" value="UniProtKB"/>
</dbReference>
<dbReference type="GO" id="GO:0031418">
    <property type="term" value="F:L-ascorbic acid binding"/>
    <property type="evidence" value="ECO:0007669"/>
    <property type="project" value="UniProtKB-KW"/>
</dbReference>
<dbReference type="GO" id="GO:0042420">
    <property type="term" value="P:dopamine catabolic process"/>
    <property type="evidence" value="ECO:0000250"/>
    <property type="project" value="UniProtKB"/>
</dbReference>
<dbReference type="GO" id="GO:0042421">
    <property type="term" value="P:norepinephrine biosynthetic process"/>
    <property type="evidence" value="ECO:0000250"/>
    <property type="project" value="UniProtKB"/>
</dbReference>
<dbReference type="GO" id="GO:0006589">
    <property type="term" value="P:octopamine biosynthetic process"/>
    <property type="evidence" value="ECO:0000318"/>
    <property type="project" value="GO_Central"/>
</dbReference>
<dbReference type="CDD" id="cd09631">
    <property type="entry name" value="DOMON_DOH"/>
    <property type="match status" value="1"/>
</dbReference>
<dbReference type="FunFam" id="2.60.120.310:FF:000003">
    <property type="entry name" value="Dopamine beta-hydroxylase"/>
    <property type="match status" value="1"/>
</dbReference>
<dbReference type="FunFam" id="2.60.120.230:FF:000001">
    <property type="entry name" value="Monooxygenase, DBH-like 1"/>
    <property type="match status" value="1"/>
</dbReference>
<dbReference type="Gene3D" id="2.60.120.230">
    <property type="match status" value="1"/>
</dbReference>
<dbReference type="Gene3D" id="2.60.120.310">
    <property type="entry name" value="Copper type II, ascorbate-dependent monooxygenase, N-terminal domain"/>
    <property type="match status" value="1"/>
</dbReference>
<dbReference type="InterPro" id="IPR014784">
    <property type="entry name" value="Cu2_ascorb_mOase-like_C"/>
</dbReference>
<dbReference type="InterPro" id="IPR000323">
    <property type="entry name" value="Cu2_ascorb_mOase_N"/>
</dbReference>
<dbReference type="InterPro" id="IPR036939">
    <property type="entry name" value="Cu2_ascorb_mOase_N_sf"/>
</dbReference>
<dbReference type="InterPro" id="IPR024548">
    <property type="entry name" value="Cu2_monoox_C"/>
</dbReference>
<dbReference type="InterPro" id="IPR000945">
    <property type="entry name" value="DBH-like"/>
</dbReference>
<dbReference type="InterPro" id="IPR045266">
    <property type="entry name" value="DOH_DOMON"/>
</dbReference>
<dbReference type="InterPro" id="IPR005018">
    <property type="entry name" value="DOMON_domain"/>
</dbReference>
<dbReference type="InterPro" id="IPR008977">
    <property type="entry name" value="PHM/PNGase_F_dom_sf"/>
</dbReference>
<dbReference type="InterPro" id="IPR028460">
    <property type="entry name" value="Tbh/DBH"/>
</dbReference>
<dbReference type="PANTHER" id="PTHR10157">
    <property type="entry name" value="DOPAMINE BETA HYDROXYLASE RELATED"/>
    <property type="match status" value="1"/>
</dbReference>
<dbReference type="PANTHER" id="PTHR10157:SF29">
    <property type="entry name" value="DOPAMINE BETA-HYDROXYLASE"/>
    <property type="match status" value="1"/>
</dbReference>
<dbReference type="Pfam" id="PF03712">
    <property type="entry name" value="Cu2_monoox_C"/>
    <property type="match status" value="1"/>
</dbReference>
<dbReference type="Pfam" id="PF01082">
    <property type="entry name" value="Cu2_monooxygen"/>
    <property type="match status" value="1"/>
</dbReference>
<dbReference type="Pfam" id="PF03351">
    <property type="entry name" value="DOMON"/>
    <property type="match status" value="1"/>
</dbReference>
<dbReference type="PRINTS" id="PR00767">
    <property type="entry name" value="DBMONOXGNASE"/>
</dbReference>
<dbReference type="SMART" id="SM00664">
    <property type="entry name" value="DoH"/>
    <property type="match status" value="1"/>
</dbReference>
<dbReference type="SUPFAM" id="SSF49742">
    <property type="entry name" value="PHM/PNGase F"/>
    <property type="match status" value="2"/>
</dbReference>
<dbReference type="PROSITE" id="PS50836">
    <property type="entry name" value="DOMON"/>
    <property type="match status" value="1"/>
</dbReference>
<proteinExistence type="evidence at transcript level"/>
<organism>
    <name type="scientific">Canis lupus familiaris</name>
    <name type="common">Dog</name>
    <name type="synonym">Canis familiaris</name>
    <dbReference type="NCBI Taxonomy" id="9615"/>
    <lineage>
        <taxon>Eukaryota</taxon>
        <taxon>Metazoa</taxon>
        <taxon>Chordata</taxon>
        <taxon>Craniata</taxon>
        <taxon>Vertebrata</taxon>
        <taxon>Euteleostomi</taxon>
        <taxon>Mammalia</taxon>
        <taxon>Eutheria</taxon>
        <taxon>Laurasiatheria</taxon>
        <taxon>Carnivora</taxon>
        <taxon>Caniformia</taxon>
        <taxon>Canidae</taxon>
        <taxon>Canis</taxon>
    </lineage>
</organism>
<reference key="1">
    <citation type="journal article" date="2005" name="J. Vet. Med. Sci.">
        <title>Canine tyrosine hydroxylase (TH) gene and dopamine beta-hydroxylase (DBH) gene: their sequences, genetic polymorphisms, and diversities among five different dog breeds.</title>
        <authorList>
            <person name="Takeuchi Y."/>
            <person name="Hashizume C."/>
            <person name="Chon E.M.H."/>
            <person name="Momozawa Y."/>
            <person name="Masuda K."/>
            <person name="Kikusui T."/>
            <person name="Mori Y."/>
        </authorList>
    </citation>
    <scope>NUCLEOTIDE SEQUENCE [MRNA]</scope>
    <scope>VARIANTS LYS-263 AND GLY-607</scope>
    <source>
        <strain>Beagle</strain>
        <tissue>Brain</tissue>
    </source>
</reference>
<accession>Q68CI2</accession>
<name>DOPO_CANLF</name>
<gene>
    <name type="primary">DBH</name>
</gene>
<evidence type="ECO:0000250" key="1">
    <source>
        <dbReference type="UniProtKB" id="P09172"/>
    </source>
</evidence>
<evidence type="ECO:0000250" key="2">
    <source>
        <dbReference type="UniProtKB" id="P15101"/>
    </source>
</evidence>
<evidence type="ECO:0000255" key="3"/>
<evidence type="ECO:0000255" key="4">
    <source>
        <dbReference type="PROSITE-ProRule" id="PRU00246"/>
    </source>
</evidence>
<evidence type="ECO:0000269" key="5">
    <source>
    </source>
</evidence>
<evidence type="ECO:0000305" key="6"/>